<protein>
    <recommendedName>
        <fullName>Sulfate adenylyltransferase</fullName>
        <ecNumber>2.7.7.4</ecNumber>
    </recommendedName>
    <alternativeName>
        <fullName>ATP-sulfurylase</fullName>
    </alternativeName>
    <alternativeName>
        <fullName>Sulfate adenylate transferase</fullName>
        <shortName>SAT</shortName>
    </alternativeName>
</protein>
<proteinExistence type="evidence at protein level"/>
<accession>Q54506</accession>
<dbReference type="EC" id="2.7.7.4"/>
<dbReference type="EMBL" id="L26897">
    <property type="protein sequence ID" value="AAA72419.1"/>
    <property type="molecule type" value="Genomic_DNA"/>
</dbReference>
<dbReference type="PDB" id="1JHD">
    <property type="method" value="X-ray"/>
    <property type="resolution" value="1.70 A"/>
    <property type="chains" value="A=1-386"/>
</dbReference>
<dbReference type="PDBsum" id="1JHD"/>
<dbReference type="SMR" id="Q54506"/>
<dbReference type="BioCyc" id="MetaCyc:MONOMER-12450"/>
<dbReference type="UniPathway" id="UPA00140">
    <property type="reaction ID" value="UER00204"/>
</dbReference>
<dbReference type="EvolutionaryTrace" id="Q54506"/>
<dbReference type="GO" id="GO:0005524">
    <property type="term" value="F:ATP binding"/>
    <property type="evidence" value="ECO:0007669"/>
    <property type="project" value="UniProtKB-KW"/>
</dbReference>
<dbReference type="GO" id="GO:0004781">
    <property type="term" value="F:sulfate adenylyltransferase (ATP) activity"/>
    <property type="evidence" value="ECO:0007669"/>
    <property type="project" value="UniProtKB-UniRule"/>
</dbReference>
<dbReference type="GO" id="GO:0070814">
    <property type="term" value="P:hydrogen sulfide biosynthetic process"/>
    <property type="evidence" value="ECO:0007669"/>
    <property type="project" value="UniProtKB-UniRule"/>
</dbReference>
<dbReference type="GO" id="GO:0000103">
    <property type="term" value="P:sulfate assimilation"/>
    <property type="evidence" value="ECO:0007669"/>
    <property type="project" value="UniProtKB-UniRule"/>
</dbReference>
<dbReference type="Gene3D" id="3.40.50.620">
    <property type="entry name" value="HUPs"/>
    <property type="match status" value="1"/>
</dbReference>
<dbReference type="Gene3D" id="3.10.400.10">
    <property type="entry name" value="Sulfate adenylyltransferase"/>
    <property type="match status" value="1"/>
</dbReference>
<dbReference type="HAMAP" id="MF_00066">
    <property type="entry name" value="Sulf_adenylyltr"/>
    <property type="match status" value="1"/>
</dbReference>
<dbReference type="InterPro" id="IPR025980">
    <property type="entry name" value="ATP-Sase_PUA-like_dom"/>
</dbReference>
<dbReference type="InterPro" id="IPR015947">
    <property type="entry name" value="PUA-like_sf"/>
</dbReference>
<dbReference type="InterPro" id="IPR014729">
    <property type="entry name" value="Rossmann-like_a/b/a_fold"/>
</dbReference>
<dbReference type="InterPro" id="IPR020792">
    <property type="entry name" value="SO4_adenylyltransferase_pro"/>
</dbReference>
<dbReference type="InterPro" id="IPR024951">
    <property type="entry name" value="Sulfurylase_cat_dom"/>
</dbReference>
<dbReference type="InterPro" id="IPR002650">
    <property type="entry name" value="Sulphate_adenylyltransferase"/>
</dbReference>
<dbReference type="NCBIfam" id="TIGR00339">
    <property type="entry name" value="sopT"/>
    <property type="match status" value="1"/>
</dbReference>
<dbReference type="PANTHER" id="PTHR43509">
    <property type="match status" value="1"/>
</dbReference>
<dbReference type="PANTHER" id="PTHR43509:SF1">
    <property type="entry name" value="SULFATE ADENYLYLTRANSFERASE"/>
    <property type="match status" value="1"/>
</dbReference>
<dbReference type="Pfam" id="PF01747">
    <property type="entry name" value="ATP-sulfurylase"/>
    <property type="match status" value="1"/>
</dbReference>
<dbReference type="Pfam" id="PF14306">
    <property type="entry name" value="PUA_2"/>
    <property type="match status" value="1"/>
</dbReference>
<dbReference type="SUPFAM" id="SSF52374">
    <property type="entry name" value="Nucleotidylyl transferase"/>
    <property type="match status" value="1"/>
</dbReference>
<dbReference type="SUPFAM" id="SSF88697">
    <property type="entry name" value="PUA domain-like"/>
    <property type="match status" value="1"/>
</dbReference>
<reference key="1">
    <citation type="journal article" date="1994" name="J. Bacteriol.">
        <title>Characterization of the gene encoding the autotrophic ATP sulfurylase from the bacterial endosymbiont of the hydrothermal vent tubeworm Riftia pachyptila.</title>
        <authorList>
            <person name="Laue B."/>
            <person name="Nelson D.C."/>
        </authorList>
    </citation>
    <scope>NUCLEOTIDE SEQUENCE [GENOMIC DNA]</scope>
</reference>
<name>SAT_RIFPS</name>
<evidence type="ECO:0000256" key="1">
    <source>
        <dbReference type="SAM" id="MobiDB-lite"/>
    </source>
</evidence>
<evidence type="ECO:0000305" key="2"/>
<evidence type="ECO:0007829" key="3">
    <source>
        <dbReference type="PDB" id="1JHD"/>
    </source>
</evidence>
<feature type="chain" id="PRO_0000105941" description="Sulfate adenylyltransferase">
    <location>
        <begin position="1"/>
        <end position="437"/>
    </location>
</feature>
<feature type="region of interest" description="Disordered" evidence="1">
    <location>
        <begin position="303"/>
        <end position="322"/>
    </location>
</feature>
<feature type="compositionally biased region" description="Low complexity" evidence="1">
    <location>
        <begin position="303"/>
        <end position="314"/>
    </location>
</feature>
<feature type="strand" evidence="3">
    <location>
        <begin position="7"/>
        <end position="9"/>
    </location>
</feature>
<feature type="helix" evidence="3">
    <location>
        <begin position="18"/>
        <end position="28"/>
    </location>
</feature>
<feature type="strand" evidence="3">
    <location>
        <begin position="33"/>
        <end position="35"/>
    </location>
</feature>
<feature type="helix" evidence="3">
    <location>
        <begin position="38"/>
        <end position="48"/>
    </location>
</feature>
<feature type="turn" evidence="3">
    <location>
        <begin position="49"/>
        <end position="54"/>
    </location>
</feature>
<feature type="helix" evidence="3">
    <location>
        <begin position="60"/>
        <end position="69"/>
    </location>
</feature>
<feature type="strand" evidence="3">
    <location>
        <begin position="84"/>
        <end position="86"/>
    </location>
</feature>
<feature type="turn" evidence="3">
    <location>
        <begin position="89"/>
        <end position="93"/>
    </location>
</feature>
<feature type="strand" evidence="3">
    <location>
        <begin position="95"/>
        <end position="100"/>
    </location>
</feature>
<feature type="strand" evidence="3">
    <location>
        <begin position="109"/>
        <end position="114"/>
    </location>
</feature>
<feature type="strand" evidence="3">
    <location>
        <begin position="117"/>
        <end position="120"/>
    </location>
</feature>
<feature type="helix" evidence="3">
    <location>
        <begin position="123"/>
        <end position="134"/>
    </location>
</feature>
<feature type="helix" evidence="3">
    <location>
        <begin position="142"/>
        <end position="147"/>
    </location>
</feature>
<feature type="strand" evidence="3">
    <location>
        <begin position="152"/>
        <end position="161"/>
    </location>
</feature>
<feature type="helix" evidence="3">
    <location>
        <begin position="165"/>
        <end position="170"/>
    </location>
</feature>
<feature type="turn" evidence="3">
    <location>
        <begin position="172"/>
        <end position="174"/>
    </location>
</feature>
<feature type="helix" evidence="3">
    <location>
        <begin position="178"/>
        <end position="188"/>
    </location>
</feature>
<feature type="strand" evidence="3">
    <location>
        <begin position="191"/>
        <end position="200"/>
    </location>
</feature>
<feature type="helix" evidence="3">
    <location>
        <begin position="204"/>
        <end position="217"/>
    </location>
</feature>
<feature type="strand" evidence="3">
    <location>
        <begin position="220"/>
        <end position="228"/>
    </location>
</feature>
<feature type="helix" evidence="3">
    <location>
        <begin position="238"/>
        <end position="252"/>
    </location>
</feature>
<feature type="strand" evidence="3">
    <location>
        <begin position="258"/>
        <end position="264"/>
    </location>
</feature>
<feature type="helix" evidence="3">
    <location>
        <begin position="272"/>
        <end position="284"/>
    </location>
</feature>
<feature type="strand" evidence="3">
    <location>
        <begin position="288"/>
        <end position="292"/>
    </location>
</feature>
<feature type="turn" evidence="3">
    <location>
        <begin position="294"/>
        <end position="299"/>
    </location>
</feature>
<feature type="helix" evidence="3">
    <location>
        <begin position="300"/>
        <end position="307"/>
    </location>
</feature>
<feature type="strand" evidence="3">
    <location>
        <begin position="322"/>
        <end position="325"/>
    </location>
</feature>
<feature type="turn" evidence="3">
    <location>
        <begin position="326"/>
        <end position="329"/>
    </location>
</feature>
<feature type="strand" evidence="3">
    <location>
        <begin position="330"/>
        <end position="333"/>
    </location>
</feature>
<feature type="helix" evidence="3">
    <location>
        <begin position="356"/>
        <end position="359"/>
    </location>
</feature>
<feature type="helix" evidence="3">
    <location>
        <begin position="362"/>
        <end position="366"/>
    </location>
</feature>
<feature type="turn" evidence="3">
    <location>
        <begin position="373"/>
        <end position="375"/>
    </location>
</feature>
<feature type="helix" evidence="3">
    <location>
        <begin position="378"/>
        <end position="386"/>
    </location>
</feature>
<gene>
    <name type="primary">sat</name>
    <name type="synonym">sopT</name>
</gene>
<comment type="catalytic activity">
    <reaction>
        <text>sulfate + ATP + H(+) = adenosine 5'-phosphosulfate + diphosphate</text>
        <dbReference type="Rhea" id="RHEA:18133"/>
        <dbReference type="ChEBI" id="CHEBI:15378"/>
        <dbReference type="ChEBI" id="CHEBI:16189"/>
        <dbReference type="ChEBI" id="CHEBI:30616"/>
        <dbReference type="ChEBI" id="CHEBI:33019"/>
        <dbReference type="ChEBI" id="CHEBI:58243"/>
        <dbReference type="EC" id="2.7.7.4"/>
    </reaction>
</comment>
<comment type="pathway">
    <text>Sulfur metabolism; hydrogen sulfide biosynthesis; sulfite from sulfate: step 1/3.</text>
</comment>
<comment type="similarity">
    <text evidence="2">Belongs to the sulfate adenylyltransferase family.</text>
</comment>
<organism>
    <name type="scientific">Riftia pachyptila sulfur-oxidizing endosymbiont</name>
    <dbReference type="NCBI Taxonomy" id="35843"/>
    <lineage>
        <taxon>Bacteria</taxon>
    </lineage>
</organism>
<keyword id="KW-0002">3D-structure</keyword>
<keyword id="KW-0067">ATP-binding</keyword>
<keyword id="KW-0547">Nucleotide-binding</keyword>
<keyword id="KW-0548">Nucleotidyltransferase</keyword>
<keyword id="KW-0808">Transferase</keyword>
<sequence>MIKPVGSDELKPLFVYDPEEHHKLSHEAESLPSVVISSQGPRVSSMMGAGYFSPAGFMNVADAMGAAEKMTLSDGSSSCSVLCLLENTDAIGDAKRIALRDPNVEGNPVLAVMDIEAIEEVSDEQMAVMTDKVYRTTDMDHIGVKTFNSQGRVAVSGPIQVLNFSYFQADFPDTFRTAVEIRNEIKEHGWSKVVAFQTRNPMHRAHEELCRMPMESLDADGVVVHMLLGKLKKGDIPAPVRDAAIRTMAEVYFPPNTVMVTGYGFDMLYAGPREAVLHAYFRQNMGATHFIIGREPPAWVTTTVPSTPRPSSMTKCQRAPWRSRSSCRPHGLLQEAEQDCDDARRAGSHQGRLRTALRHQGREMLGQGIAPPPEFSRPEVAKILMDLLPVHQQLILIWFSGKTRPGVGRWRVFLCAAGALWPEAVAVANMEKRSSTG</sequence>